<gene>
    <name evidence="1" type="primary">pnp</name>
    <name type="ordered locus">DVU_0503</name>
</gene>
<comment type="function">
    <text evidence="1">Involved in mRNA degradation. Catalyzes the phosphorolysis of single-stranded polyribonucleotides processively in the 3'- to 5'-direction.</text>
</comment>
<comment type="catalytic activity">
    <reaction evidence="1">
        <text>RNA(n+1) + phosphate = RNA(n) + a ribonucleoside 5'-diphosphate</text>
        <dbReference type="Rhea" id="RHEA:22096"/>
        <dbReference type="Rhea" id="RHEA-COMP:14527"/>
        <dbReference type="Rhea" id="RHEA-COMP:17342"/>
        <dbReference type="ChEBI" id="CHEBI:43474"/>
        <dbReference type="ChEBI" id="CHEBI:57930"/>
        <dbReference type="ChEBI" id="CHEBI:140395"/>
        <dbReference type="EC" id="2.7.7.8"/>
    </reaction>
</comment>
<comment type="cofactor">
    <cofactor evidence="1">
        <name>Mg(2+)</name>
        <dbReference type="ChEBI" id="CHEBI:18420"/>
    </cofactor>
</comment>
<comment type="subcellular location">
    <subcellularLocation>
        <location evidence="1">Cytoplasm</location>
    </subcellularLocation>
</comment>
<comment type="similarity">
    <text evidence="1">Belongs to the polyribonucleotide nucleotidyltransferase family.</text>
</comment>
<proteinExistence type="inferred from homology"/>
<evidence type="ECO:0000255" key="1">
    <source>
        <dbReference type="HAMAP-Rule" id="MF_01595"/>
    </source>
</evidence>
<evidence type="ECO:0000256" key="2">
    <source>
        <dbReference type="SAM" id="MobiDB-lite"/>
    </source>
</evidence>
<reference key="1">
    <citation type="journal article" date="2004" name="Nat. Biotechnol.">
        <title>The genome sequence of the anaerobic, sulfate-reducing bacterium Desulfovibrio vulgaris Hildenborough.</title>
        <authorList>
            <person name="Heidelberg J.F."/>
            <person name="Seshadri R."/>
            <person name="Haveman S.A."/>
            <person name="Hemme C.L."/>
            <person name="Paulsen I.T."/>
            <person name="Kolonay J.F."/>
            <person name="Eisen J.A."/>
            <person name="Ward N.L."/>
            <person name="Methe B.A."/>
            <person name="Brinkac L.M."/>
            <person name="Daugherty S.C."/>
            <person name="DeBoy R.T."/>
            <person name="Dodson R.J."/>
            <person name="Durkin A.S."/>
            <person name="Madupu R."/>
            <person name="Nelson W.C."/>
            <person name="Sullivan S.A."/>
            <person name="Fouts D.E."/>
            <person name="Haft D.H."/>
            <person name="Selengut J."/>
            <person name="Peterson J.D."/>
            <person name="Davidsen T.M."/>
            <person name="Zafar N."/>
            <person name="Zhou L."/>
            <person name="Radune D."/>
            <person name="Dimitrov G."/>
            <person name="Hance M."/>
            <person name="Tran K."/>
            <person name="Khouri H.M."/>
            <person name="Gill J."/>
            <person name="Utterback T.R."/>
            <person name="Feldblyum T.V."/>
            <person name="Wall J.D."/>
            <person name="Voordouw G."/>
            <person name="Fraser C.M."/>
        </authorList>
    </citation>
    <scope>NUCLEOTIDE SEQUENCE [LARGE SCALE GENOMIC DNA]</scope>
    <source>
        <strain>ATCC 29579 / DSM 644 / CCUG 34227 / NCIMB 8303 / VKM B-1760 / Hildenborough</strain>
    </source>
</reference>
<protein>
    <recommendedName>
        <fullName evidence="1">Polyribonucleotide nucleotidyltransferase</fullName>
        <ecNumber evidence="1">2.7.7.8</ecNumber>
    </recommendedName>
    <alternativeName>
        <fullName evidence="1">Polynucleotide phosphorylase</fullName>
        <shortName evidence="1">PNPase</shortName>
    </alternativeName>
</protein>
<accession>Q72ER6</accession>
<feature type="chain" id="PRO_0000329626" description="Polyribonucleotide nucleotidyltransferase">
    <location>
        <begin position="1"/>
        <end position="760"/>
    </location>
</feature>
<feature type="domain" description="KH" evidence="1">
    <location>
        <begin position="559"/>
        <end position="618"/>
    </location>
</feature>
<feature type="domain" description="S1 motif" evidence="1">
    <location>
        <begin position="628"/>
        <end position="702"/>
    </location>
</feature>
<feature type="region of interest" description="Disordered" evidence="2">
    <location>
        <begin position="706"/>
        <end position="760"/>
    </location>
</feature>
<feature type="compositionally biased region" description="Basic and acidic residues" evidence="2">
    <location>
        <begin position="719"/>
        <end position="760"/>
    </location>
</feature>
<feature type="binding site" evidence="1">
    <location>
        <position position="492"/>
    </location>
    <ligand>
        <name>Mg(2+)</name>
        <dbReference type="ChEBI" id="CHEBI:18420"/>
    </ligand>
</feature>
<feature type="binding site" evidence="1">
    <location>
        <position position="498"/>
    </location>
    <ligand>
        <name>Mg(2+)</name>
        <dbReference type="ChEBI" id="CHEBI:18420"/>
    </ligand>
</feature>
<keyword id="KW-0963">Cytoplasm</keyword>
<keyword id="KW-0460">Magnesium</keyword>
<keyword id="KW-0479">Metal-binding</keyword>
<keyword id="KW-0548">Nucleotidyltransferase</keyword>
<keyword id="KW-1185">Reference proteome</keyword>
<keyword id="KW-0694">RNA-binding</keyword>
<keyword id="KW-0808">Transferase</keyword>
<sequence length="760" mass="82199">MTNIFNAMRVTATVGGKEIVFETGRLANQADGAVWIQCGGTVVLVTACSQATDRDLGFFPLTVEYSEKMYAAGRIPGSFFRREIGRPSERETLVSRLIDRPIRPLFPKGLKDEVQVLANVISSDQNNDSDVLAVTGASTALGLSSIPFDGPVAGARIGRIDGQFVINPTIKEMERSDLNIVLAASRDAVVMVEGEASFVPEAVIVEALEWGHKEIQPLIDAQLKLREMAGKAKREFTAPVEDADLAARVAALATADLDVALRIPEKMARKDARKAVKEKVMEALVADPAYAEDTTPLRAVGDILSALEKRIVRERIVREGRRIDGRDTTTVRPILIEAGILPRAHGSALFARGETKSLVVATLGSSTDEQRMDSLTGDVTKRFMLHYNFAPYCVGEVKPVRVSRREIGHGALAEKALRPILPLGEDFPFTLRVVAETMESNGSSSMAAVCGGCLSLMDAGVPITAPVAGVAMGLIKEGDQYVVLTDILGDEDALGDMDFKIAGTSEGITAVQMDIKVKGLPTDVMARAMQQARDARLHILGEMGKVLEAPRAELSAYAPQHAEVFVNPDIIRIIIGPGGKNIKAITATTGASIDIEDSGRVSIFAPTLEAMEMAREMVQYYDQRADIGKNYTGKVRKVLEIGAIVEILPNLEALVHISQLDTNRVEQASDVARLGEDMVVKVIEINGDRIRASRKAVLLEEQGIEWKPEDTARPSGPREGGRRDGGRDGRRDGGRDGRRDGGRDGGRRDGGRRDGGRDRN</sequence>
<organism>
    <name type="scientific">Nitratidesulfovibrio vulgaris (strain ATCC 29579 / DSM 644 / CCUG 34227 / NCIMB 8303 / VKM B-1760 / Hildenborough)</name>
    <name type="common">Desulfovibrio vulgaris</name>
    <dbReference type="NCBI Taxonomy" id="882"/>
    <lineage>
        <taxon>Bacteria</taxon>
        <taxon>Pseudomonadati</taxon>
        <taxon>Thermodesulfobacteriota</taxon>
        <taxon>Desulfovibrionia</taxon>
        <taxon>Desulfovibrionales</taxon>
        <taxon>Desulfovibrionaceae</taxon>
        <taxon>Nitratidesulfovibrio</taxon>
    </lineage>
</organism>
<name>PNP_NITV2</name>
<dbReference type="EC" id="2.7.7.8" evidence="1"/>
<dbReference type="EMBL" id="AE017285">
    <property type="protein sequence ID" value="AAS94985.1"/>
    <property type="molecule type" value="Genomic_DNA"/>
</dbReference>
<dbReference type="RefSeq" id="WP_010937809.1">
    <property type="nucleotide sequence ID" value="NC_002937.3"/>
</dbReference>
<dbReference type="RefSeq" id="YP_009726.1">
    <property type="nucleotide sequence ID" value="NC_002937.3"/>
</dbReference>
<dbReference type="SMR" id="Q72ER6"/>
<dbReference type="IntAct" id="Q72ER6">
    <property type="interactions" value="1"/>
</dbReference>
<dbReference type="STRING" id="882.DVU_0503"/>
<dbReference type="PaxDb" id="882-DVU_0503"/>
<dbReference type="EnsemblBacteria" id="AAS94985">
    <property type="protein sequence ID" value="AAS94985"/>
    <property type="gene ID" value="DVU_0503"/>
</dbReference>
<dbReference type="KEGG" id="dvu:DVU_0503"/>
<dbReference type="PATRIC" id="fig|882.5.peg.480"/>
<dbReference type="eggNOG" id="COG1185">
    <property type="taxonomic scope" value="Bacteria"/>
</dbReference>
<dbReference type="HOGENOM" id="CLU_004217_2_2_7"/>
<dbReference type="OrthoDB" id="9804305at2"/>
<dbReference type="PhylomeDB" id="Q72ER6"/>
<dbReference type="Proteomes" id="UP000002194">
    <property type="component" value="Chromosome"/>
</dbReference>
<dbReference type="GO" id="GO:0005829">
    <property type="term" value="C:cytosol"/>
    <property type="evidence" value="ECO:0007669"/>
    <property type="project" value="TreeGrafter"/>
</dbReference>
<dbReference type="GO" id="GO:0000175">
    <property type="term" value="F:3'-5'-RNA exonuclease activity"/>
    <property type="evidence" value="ECO:0007669"/>
    <property type="project" value="TreeGrafter"/>
</dbReference>
<dbReference type="GO" id="GO:0000287">
    <property type="term" value="F:magnesium ion binding"/>
    <property type="evidence" value="ECO:0007669"/>
    <property type="project" value="UniProtKB-UniRule"/>
</dbReference>
<dbReference type="GO" id="GO:0004654">
    <property type="term" value="F:polyribonucleotide nucleotidyltransferase activity"/>
    <property type="evidence" value="ECO:0007669"/>
    <property type="project" value="UniProtKB-UniRule"/>
</dbReference>
<dbReference type="GO" id="GO:0003723">
    <property type="term" value="F:RNA binding"/>
    <property type="evidence" value="ECO:0007669"/>
    <property type="project" value="UniProtKB-UniRule"/>
</dbReference>
<dbReference type="GO" id="GO:0006402">
    <property type="term" value="P:mRNA catabolic process"/>
    <property type="evidence" value="ECO:0007669"/>
    <property type="project" value="UniProtKB-UniRule"/>
</dbReference>
<dbReference type="GO" id="GO:0006396">
    <property type="term" value="P:RNA processing"/>
    <property type="evidence" value="ECO:0007669"/>
    <property type="project" value="InterPro"/>
</dbReference>
<dbReference type="CDD" id="cd02393">
    <property type="entry name" value="KH-I_PNPase"/>
    <property type="match status" value="1"/>
</dbReference>
<dbReference type="CDD" id="cd11363">
    <property type="entry name" value="RNase_PH_PNPase_1"/>
    <property type="match status" value="1"/>
</dbReference>
<dbReference type="CDD" id="cd11364">
    <property type="entry name" value="RNase_PH_PNPase_2"/>
    <property type="match status" value="1"/>
</dbReference>
<dbReference type="FunFam" id="3.30.1370.10:FF:000001">
    <property type="entry name" value="Polyribonucleotide nucleotidyltransferase"/>
    <property type="match status" value="1"/>
</dbReference>
<dbReference type="FunFam" id="3.30.230.70:FF:000001">
    <property type="entry name" value="Polyribonucleotide nucleotidyltransferase"/>
    <property type="match status" value="1"/>
</dbReference>
<dbReference type="FunFam" id="3.30.230.70:FF:000002">
    <property type="entry name" value="Polyribonucleotide nucleotidyltransferase"/>
    <property type="match status" value="1"/>
</dbReference>
<dbReference type="Gene3D" id="3.30.230.70">
    <property type="entry name" value="GHMP Kinase, N-terminal domain"/>
    <property type="match status" value="2"/>
</dbReference>
<dbReference type="Gene3D" id="3.30.1370.10">
    <property type="entry name" value="K Homology domain, type 1"/>
    <property type="match status" value="1"/>
</dbReference>
<dbReference type="Gene3D" id="2.40.50.140">
    <property type="entry name" value="Nucleic acid-binding proteins"/>
    <property type="match status" value="1"/>
</dbReference>
<dbReference type="HAMAP" id="MF_01595">
    <property type="entry name" value="PNPase"/>
    <property type="match status" value="1"/>
</dbReference>
<dbReference type="InterPro" id="IPR001247">
    <property type="entry name" value="ExoRNase_PH_dom1"/>
</dbReference>
<dbReference type="InterPro" id="IPR015847">
    <property type="entry name" value="ExoRNase_PH_dom2"/>
</dbReference>
<dbReference type="InterPro" id="IPR036345">
    <property type="entry name" value="ExoRNase_PH_dom2_sf"/>
</dbReference>
<dbReference type="InterPro" id="IPR004087">
    <property type="entry name" value="KH_dom"/>
</dbReference>
<dbReference type="InterPro" id="IPR004088">
    <property type="entry name" value="KH_dom_type_1"/>
</dbReference>
<dbReference type="InterPro" id="IPR036612">
    <property type="entry name" value="KH_dom_type_1_sf"/>
</dbReference>
<dbReference type="InterPro" id="IPR012340">
    <property type="entry name" value="NA-bd_OB-fold"/>
</dbReference>
<dbReference type="InterPro" id="IPR012162">
    <property type="entry name" value="PNPase"/>
</dbReference>
<dbReference type="InterPro" id="IPR027408">
    <property type="entry name" value="PNPase/RNase_PH_dom_sf"/>
</dbReference>
<dbReference type="InterPro" id="IPR015848">
    <property type="entry name" value="PNPase_PH_RNA-bd_bac/org-type"/>
</dbReference>
<dbReference type="InterPro" id="IPR020568">
    <property type="entry name" value="Ribosomal_Su5_D2-typ_SF"/>
</dbReference>
<dbReference type="InterPro" id="IPR003029">
    <property type="entry name" value="S1_domain"/>
</dbReference>
<dbReference type="NCBIfam" id="TIGR03591">
    <property type="entry name" value="polynuc_phos"/>
    <property type="match status" value="1"/>
</dbReference>
<dbReference type="NCBIfam" id="NF008805">
    <property type="entry name" value="PRK11824.1"/>
    <property type="match status" value="1"/>
</dbReference>
<dbReference type="PANTHER" id="PTHR11252">
    <property type="entry name" value="POLYRIBONUCLEOTIDE NUCLEOTIDYLTRANSFERASE"/>
    <property type="match status" value="1"/>
</dbReference>
<dbReference type="PANTHER" id="PTHR11252:SF0">
    <property type="entry name" value="POLYRIBONUCLEOTIDE NUCLEOTIDYLTRANSFERASE 1, MITOCHONDRIAL"/>
    <property type="match status" value="1"/>
</dbReference>
<dbReference type="Pfam" id="PF00013">
    <property type="entry name" value="KH_1"/>
    <property type="match status" value="1"/>
</dbReference>
<dbReference type="Pfam" id="PF03726">
    <property type="entry name" value="PNPase"/>
    <property type="match status" value="1"/>
</dbReference>
<dbReference type="Pfam" id="PF01138">
    <property type="entry name" value="RNase_PH"/>
    <property type="match status" value="2"/>
</dbReference>
<dbReference type="Pfam" id="PF03725">
    <property type="entry name" value="RNase_PH_C"/>
    <property type="match status" value="2"/>
</dbReference>
<dbReference type="Pfam" id="PF00575">
    <property type="entry name" value="S1"/>
    <property type="match status" value="1"/>
</dbReference>
<dbReference type="PIRSF" id="PIRSF005499">
    <property type="entry name" value="PNPase"/>
    <property type="match status" value="1"/>
</dbReference>
<dbReference type="SMART" id="SM00322">
    <property type="entry name" value="KH"/>
    <property type="match status" value="1"/>
</dbReference>
<dbReference type="SMART" id="SM00316">
    <property type="entry name" value="S1"/>
    <property type="match status" value="1"/>
</dbReference>
<dbReference type="SUPFAM" id="SSF54791">
    <property type="entry name" value="Eukaryotic type KH-domain (KH-domain type I)"/>
    <property type="match status" value="1"/>
</dbReference>
<dbReference type="SUPFAM" id="SSF50249">
    <property type="entry name" value="Nucleic acid-binding proteins"/>
    <property type="match status" value="1"/>
</dbReference>
<dbReference type="SUPFAM" id="SSF55666">
    <property type="entry name" value="Ribonuclease PH domain 2-like"/>
    <property type="match status" value="2"/>
</dbReference>
<dbReference type="SUPFAM" id="SSF54211">
    <property type="entry name" value="Ribosomal protein S5 domain 2-like"/>
    <property type="match status" value="2"/>
</dbReference>
<dbReference type="PROSITE" id="PS50084">
    <property type="entry name" value="KH_TYPE_1"/>
    <property type="match status" value="1"/>
</dbReference>
<dbReference type="PROSITE" id="PS50126">
    <property type="entry name" value="S1"/>
    <property type="match status" value="1"/>
</dbReference>